<dbReference type="EMBL" id="CR860214">
    <property type="protein sequence ID" value="CAH92356.1"/>
    <property type="molecule type" value="mRNA"/>
</dbReference>
<dbReference type="EMBL" id="CR860328">
    <property type="protein sequence ID" value="CAH92465.1"/>
    <property type="molecule type" value="mRNA"/>
</dbReference>
<dbReference type="RefSeq" id="NP_001126387.1">
    <property type="nucleotide sequence ID" value="NM_001132915.1"/>
</dbReference>
<dbReference type="RefSeq" id="XP_009236948.1">
    <property type="nucleotide sequence ID" value="XM_009238673.1"/>
</dbReference>
<dbReference type="RefSeq" id="XP_024092969.1">
    <property type="nucleotide sequence ID" value="XM_024237201.2"/>
</dbReference>
<dbReference type="RefSeq" id="XP_024093024.1">
    <property type="nucleotide sequence ID" value="XM_024237256.2"/>
</dbReference>
<dbReference type="RefSeq" id="XP_024093071.1">
    <property type="nucleotide sequence ID" value="XM_024237303.3"/>
</dbReference>
<dbReference type="RefSeq" id="XP_024093118.1">
    <property type="nucleotide sequence ID" value="XM_024237350.3"/>
</dbReference>
<dbReference type="RefSeq" id="XP_024093158.1">
    <property type="nucleotide sequence ID" value="XM_024237390.2"/>
</dbReference>
<dbReference type="RefSeq" id="XP_024093221.1">
    <property type="nucleotide sequence ID" value="XM_024237453.3"/>
</dbReference>
<dbReference type="RefSeq" id="XP_024093278.1">
    <property type="nucleotide sequence ID" value="XM_024237510.3"/>
</dbReference>
<dbReference type="RefSeq" id="XP_054390122.1">
    <property type="nucleotide sequence ID" value="XM_054534147.2"/>
</dbReference>
<dbReference type="SMR" id="Q5R7A4"/>
<dbReference type="FunCoup" id="Q5R7A4">
    <property type="interactions" value="819"/>
</dbReference>
<dbReference type="STRING" id="9601.ENSPPYP00000000318"/>
<dbReference type="Ensembl" id="ENSPPYT00000000335.3">
    <property type="protein sequence ID" value="ENSPPYP00000000318.2"/>
    <property type="gene ID" value="ENSPPYG00000000298.3"/>
</dbReference>
<dbReference type="GeneID" id="100173368"/>
<dbReference type="KEGG" id="pon:100173368"/>
<dbReference type="CTD" id="8934"/>
<dbReference type="eggNOG" id="KOG4423">
    <property type="taxonomic scope" value="Eukaryota"/>
</dbReference>
<dbReference type="GeneTree" id="ENSGT00940000159363"/>
<dbReference type="HOGENOM" id="CLU_041217_10_6_1"/>
<dbReference type="InParanoid" id="Q5R7A4"/>
<dbReference type="OMA" id="NNFIGWT"/>
<dbReference type="OrthoDB" id="245989at2759"/>
<dbReference type="TreeFam" id="TF324491"/>
<dbReference type="Proteomes" id="UP000001595">
    <property type="component" value="Chromosome 1"/>
</dbReference>
<dbReference type="GO" id="GO:0005801">
    <property type="term" value="C:cis-Golgi network"/>
    <property type="evidence" value="ECO:0007669"/>
    <property type="project" value="Ensembl"/>
</dbReference>
<dbReference type="GO" id="GO:0005737">
    <property type="term" value="C:cytoplasm"/>
    <property type="evidence" value="ECO:0000250"/>
    <property type="project" value="UniProtKB"/>
</dbReference>
<dbReference type="GO" id="GO:0005856">
    <property type="term" value="C:cytoskeleton"/>
    <property type="evidence" value="ECO:0007669"/>
    <property type="project" value="UniProtKB-SubCell"/>
</dbReference>
<dbReference type="GO" id="GO:0005829">
    <property type="term" value="C:cytosol"/>
    <property type="evidence" value="ECO:0007669"/>
    <property type="project" value="Ensembl"/>
</dbReference>
<dbReference type="GO" id="GO:0005769">
    <property type="term" value="C:early endosome"/>
    <property type="evidence" value="ECO:0007669"/>
    <property type="project" value="Ensembl"/>
</dbReference>
<dbReference type="GO" id="GO:0000139">
    <property type="term" value="C:Golgi membrane"/>
    <property type="evidence" value="ECO:0007669"/>
    <property type="project" value="UniProtKB-SubCell"/>
</dbReference>
<dbReference type="GO" id="GO:0005770">
    <property type="term" value="C:late endosome"/>
    <property type="evidence" value="ECO:0007669"/>
    <property type="project" value="TreeGrafter"/>
</dbReference>
<dbReference type="GO" id="GO:0005764">
    <property type="term" value="C:lysosome"/>
    <property type="evidence" value="ECO:0007669"/>
    <property type="project" value="TreeGrafter"/>
</dbReference>
<dbReference type="GO" id="GO:0005739">
    <property type="term" value="C:mitochondrion"/>
    <property type="evidence" value="ECO:0007669"/>
    <property type="project" value="Ensembl"/>
</dbReference>
<dbReference type="GO" id="GO:0031965">
    <property type="term" value="C:nuclear membrane"/>
    <property type="evidence" value="ECO:0007669"/>
    <property type="project" value="Ensembl"/>
</dbReference>
<dbReference type="GO" id="GO:0005654">
    <property type="term" value="C:nucleoplasm"/>
    <property type="evidence" value="ECO:0007669"/>
    <property type="project" value="Ensembl"/>
</dbReference>
<dbReference type="GO" id="GO:0048471">
    <property type="term" value="C:perinuclear region of cytoplasm"/>
    <property type="evidence" value="ECO:0007669"/>
    <property type="project" value="UniProtKB-SubCell"/>
</dbReference>
<dbReference type="GO" id="GO:0045335">
    <property type="term" value="C:phagocytic vesicle"/>
    <property type="evidence" value="ECO:0007669"/>
    <property type="project" value="TreeGrafter"/>
</dbReference>
<dbReference type="GO" id="GO:0005886">
    <property type="term" value="C:plasma membrane"/>
    <property type="evidence" value="ECO:0007669"/>
    <property type="project" value="UniProtKB-SubCell"/>
</dbReference>
<dbReference type="GO" id="GO:0055037">
    <property type="term" value="C:recycling endosome"/>
    <property type="evidence" value="ECO:0007669"/>
    <property type="project" value="Ensembl"/>
</dbReference>
<dbReference type="GO" id="GO:0005802">
    <property type="term" value="C:trans-Golgi network"/>
    <property type="evidence" value="ECO:0000250"/>
    <property type="project" value="UniProtKB"/>
</dbReference>
<dbReference type="GO" id="GO:0070840">
    <property type="term" value="F:dynein complex binding"/>
    <property type="evidence" value="ECO:0007669"/>
    <property type="project" value="Ensembl"/>
</dbReference>
<dbReference type="GO" id="GO:0019003">
    <property type="term" value="F:GDP binding"/>
    <property type="evidence" value="ECO:0007669"/>
    <property type="project" value="Ensembl"/>
</dbReference>
<dbReference type="GO" id="GO:0005525">
    <property type="term" value="F:GTP binding"/>
    <property type="evidence" value="ECO:0007669"/>
    <property type="project" value="UniProtKB-KW"/>
</dbReference>
<dbReference type="GO" id="GO:0003924">
    <property type="term" value="F:GTPase activity"/>
    <property type="evidence" value="ECO:0007669"/>
    <property type="project" value="InterPro"/>
</dbReference>
<dbReference type="GO" id="GO:0019894">
    <property type="term" value="F:kinesin binding"/>
    <property type="evidence" value="ECO:0007669"/>
    <property type="project" value="Ensembl"/>
</dbReference>
<dbReference type="GO" id="GO:0031267">
    <property type="term" value="F:small GTPase binding"/>
    <property type="evidence" value="ECO:0007669"/>
    <property type="project" value="Ensembl"/>
</dbReference>
<dbReference type="GO" id="GO:0030154">
    <property type="term" value="P:cell differentiation"/>
    <property type="evidence" value="ECO:0007669"/>
    <property type="project" value="UniProtKB-KW"/>
</dbReference>
<dbReference type="GO" id="GO:1990748">
    <property type="term" value="P:cellular detoxification"/>
    <property type="evidence" value="ECO:0007669"/>
    <property type="project" value="Ensembl"/>
</dbReference>
<dbReference type="GO" id="GO:0008333">
    <property type="term" value="P:endosome to lysosome transport"/>
    <property type="evidence" value="ECO:0007669"/>
    <property type="project" value="TreeGrafter"/>
</dbReference>
<dbReference type="GO" id="GO:0007030">
    <property type="term" value="P:Golgi organization"/>
    <property type="evidence" value="ECO:0000250"/>
    <property type="project" value="UniProtKB"/>
</dbReference>
<dbReference type="GO" id="GO:0007005">
    <property type="term" value="P:mitochondrion organization"/>
    <property type="evidence" value="ECO:0007669"/>
    <property type="project" value="Ensembl"/>
</dbReference>
<dbReference type="GO" id="GO:0044788">
    <property type="term" value="P:modulation by host of viral process"/>
    <property type="evidence" value="ECO:0007669"/>
    <property type="project" value="Ensembl"/>
</dbReference>
<dbReference type="GO" id="GO:0010977">
    <property type="term" value="P:negative regulation of neuron projection development"/>
    <property type="evidence" value="ECO:0007669"/>
    <property type="project" value="Ensembl"/>
</dbReference>
<dbReference type="GO" id="GO:0090385">
    <property type="term" value="P:phagosome-lysosome fusion"/>
    <property type="evidence" value="ECO:0007669"/>
    <property type="project" value="TreeGrafter"/>
</dbReference>
<dbReference type="GO" id="GO:0090316">
    <property type="term" value="P:positive regulation of intracellular protein transport"/>
    <property type="evidence" value="ECO:0000250"/>
    <property type="project" value="UniProtKB"/>
</dbReference>
<dbReference type="GO" id="GO:0001921">
    <property type="term" value="P:positive regulation of receptor recycling"/>
    <property type="evidence" value="ECO:0007669"/>
    <property type="project" value="Ensembl"/>
</dbReference>
<dbReference type="GO" id="GO:0050862">
    <property type="term" value="P:positive regulation of T cell receptor signaling pathway"/>
    <property type="evidence" value="ECO:0007669"/>
    <property type="project" value="Ensembl"/>
</dbReference>
<dbReference type="GO" id="GO:0072657">
    <property type="term" value="P:protein localization to membrane"/>
    <property type="evidence" value="ECO:0007669"/>
    <property type="project" value="Ensembl"/>
</dbReference>
<dbReference type="GO" id="GO:0015031">
    <property type="term" value="P:protein transport"/>
    <property type="evidence" value="ECO:0007669"/>
    <property type="project" value="UniProtKB-KW"/>
</dbReference>
<dbReference type="GO" id="GO:0009617">
    <property type="term" value="P:response to bacterium"/>
    <property type="evidence" value="ECO:0007669"/>
    <property type="project" value="Ensembl"/>
</dbReference>
<dbReference type="GO" id="GO:0042147">
    <property type="term" value="P:retrograde transport, endosome to Golgi"/>
    <property type="evidence" value="ECO:0000250"/>
    <property type="project" value="UniProtKB"/>
</dbReference>
<dbReference type="GO" id="GO:0007416">
    <property type="term" value="P:synapse assembly"/>
    <property type="evidence" value="ECO:0007669"/>
    <property type="project" value="Ensembl"/>
</dbReference>
<dbReference type="GO" id="GO:0042110">
    <property type="term" value="P:T cell activation"/>
    <property type="evidence" value="ECO:0007669"/>
    <property type="project" value="Ensembl"/>
</dbReference>
<dbReference type="CDD" id="cd04107">
    <property type="entry name" value="Rab32_Rab38"/>
    <property type="match status" value="1"/>
</dbReference>
<dbReference type="FunFam" id="3.40.50.300:FF:000222">
    <property type="entry name" value="RAB32, member RAS oncogene family"/>
    <property type="match status" value="1"/>
</dbReference>
<dbReference type="Gene3D" id="3.40.50.300">
    <property type="entry name" value="P-loop containing nucleotide triphosphate hydrolases"/>
    <property type="match status" value="1"/>
</dbReference>
<dbReference type="InterPro" id="IPR027417">
    <property type="entry name" value="P-loop_NTPase"/>
</dbReference>
<dbReference type="InterPro" id="IPR030697">
    <property type="entry name" value="Rab29/Rab38/Rab32"/>
</dbReference>
<dbReference type="InterPro" id="IPR005225">
    <property type="entry name" value="Small_GTP-bd"/>
</dbReference>
<dbReference type="InterPro" id="IPR001806">
    <property type="entry name" value="Small_GTPase"/>
</dbReference>
<dbReference type="NCBIfam" id="TIGR00231">
    <property type="entry name" value="small_GTP"/>
    <property type="match status" value="1"/>
</dbReference>
<dbReference type="PANTHER" id="PTHR47981">
    <property type="entry name" value="RAB FAMILY"/>
    <property type="match status" value="1"/>
</dbReference>
<dbReference type="PANTHER" id="PTHR47981:SF42">
    <property type="entry name" value="RAS-RELATED PROTEIN RAB-7L1-LIKE ISOFORM X1"/>
    <property type="match status" value="1"/>
</dbReference>
<dbReference type="Pfam" id="PF00071">
    <property type="entry name" value="Ras"/>
    <property type="match status" value="1"/>
</dbReference>
<dbReference type="PRINTS" id="PR00449">
    <property type="entry name" value="RASTRNSFRMNG"/>
</dbReference>
<dbReference type="SMART" id="SM00175">
    <property type="entry name" value="RAB"/>
    <property type="match status" value="1"/>
</dbReference>
<dbReference type="SMART" id="SM00176">
    <property type="entry name" value="RAN"/>
    <property type="match status" value="1"/>
</dbReference>
<dbReference type="SMART" id="SM00173">
    <property type="entry name" value="RAS"/>
    <property type="match status" value="1"/>
</dbReference>
<dbReference type="SMART" id="SM00174">
    <property type="entry name" value="RHO"/>
    <property type="match status" value="1"/>
</dbReference>
<dbReference type="SUPFAM" id="SSF52540">
    <property type="entry name" value="P-loop containing nucleoside triphosphate hydrolases"/>
    <property type="match status" value="1"/>
</dbReference>
<dbReference type="PROSITE" id="PS51419">
    <property type="entry name" value="RAB"/>
    <property type="match status" value="1"/>
</dbReference>
<name>RAB7L_PONAB</name>
<sequence>MGSRDHLFKVLVVGDAAVGKTSLVQRYSQDSFSKHYKSTVGVDFALKVLQWSDYEIVRLQLWDIAGQERFTSMTRLYYRDASACVIMFDVTNATTFSNSQRWKQDLDSKLTLPNGEPVPCLLLANKCDLSPWAVSRDQIDRFSKENGFTGWTETSVKENKNINEAMRVLIEKMMRNSTEDIMSLSTQGDYINLQTKSSSWSCC</sequence>
<comment type="function">
    <text evidence="2 3">The small GTPases Rab are key regulators in vesicle trafficking (By similarity). Essential for maintaining the integrity of endosome-trans-Golgi network structure (By similarity). Together with LRRK2, plays a role in the retrograde trafficking pathway for recycling proteins, such as mannose 6 phosphate receptor (M6PR), between lysosomes and the Golgi apparatus in a retromer-dependent manner (By similarity). Recruits LRRK2 to the Golgi apparatus and stimulates LRRK2 kinase activity (By similarity). Stimulates phosphorylation of RAB10 'Thr-73' by LRRK2 (By similarity). Also regulates neuronal process morphology in the intact central nervous system (CNS) (By similarity).</text>
</comment>
<comment type="subunit">
    <text evidence="2">Interacts with LRRK2 (via the N-terminus); this interaction is direct and stimulates kinase activity.</text>
</comment>
<comment type="subcellular location">
    <subcellularLocation>
        <location evidence="2">Cell membrane</location>
        <topology evidence="4">Lipid-anchor</topology>
        <orientation evidence="4">Cytoplasmic side</orientation>
    </subcellularLocation>
    <subcellularLocation>
        <location evidence="2">Cytoplasm</location>
    </subcellularLocation>
    <subcellularLocation>
        <location evidence="2">Cytoplasm</location>
        <location evidence="2">Perinuclear region</location>
    </subcellularLocation>
    <subcellularLocation>
        <location evidence="2">Golgi apparatus</location>
    </subcellularLocation>
    <subcellularLocation>
        <location evidence="2">Golgi apparatus membrane</location>
    </subcellularLocation>
    <subcellularLocation>
        <location evidence="2">Golgi apparatus</location>
        <location evidence="2">trans-Golgi network</location>
    </subcellularLocation>
    <subcellularLocation>
        <location evidence="2">Cytoplasm</location>
        <location evidence="2">Cytoskeleton</location>
    </subcellularLocation>
    <text evidence="2 3">Colocalizes with GM130 at the Golgi apparatus (By similarity). Colocalizes with LRRK2 at dynamic tubules emerging from and retracting to the Golgi apparatus (By similarity). Colocalizes with TGN46 at the trans-Golgi network (TGN) (By similarity).</text>
</comment>
<comment type="similarity">
    <text evidence="4">Belongs to the small GTPase superfamily. Rab family.</text>
</comment>
<evidence type="ECO:0000250" key="1"/>
<evidence type="ECO:0000250" key="2">
    <source>
        <dbReference type="UniProtKB" id="O14966"/>
    </source>
</evidence>
<evidence type="ECO:0000250" key="3">
    <source>
        <dbReference type="UniProtKB" id="Q63481"/>
    </source>
</evidence>
<evidence type="ECO:0000305" key="4"/>
<feature type="chain" id="PRO_0000260747" description="Ras-related protein Rab-7L1">
    <location>
        <begin position="1"/>
        <end position="203"/>
    </location>
</feature>
<feature type="short sequence motif" description="Effector region" evidence="1">
    <location>
        <begin position="36"/>
        <end position="44"/>
    </location>
</feature>
<feature type="binding site" evidence="2">
    <location>
        <position position="33"/>
    </location>
    <ligand>
        <name>GTP</name>
        <dbReference type="ChEBI" id="CHEBI:37565"/>
    </ligand>
</feature>
<feature type="binding site" evidence="2">
    <location>
        <position position="34"/>
    </location>
    <ligand>
        <name>GTP</name>
        <dbReference type="ChEBI" id="CHEBI:37565"/>
    </ligand>
</feature>
<feature type="binding site" evidence="2">
    <location>
        <position position="35"/>
    </location>
    <ligand>
        <name>GTP</name>
        <dbReference type="ChEBI" id="CHEBI:37565"/>
    </ligand>
</feature>
<feature type="binding site" evidence="2">
    <location>
        <position position="36"/>
    </location>
    <ligand>
        <name>GTP</name>
        <dbReference type="ChEBI" id="CHEBI:37565"/>
    </ligand>
</feature>
<feature type="binding site" evidence="2">
    <location>
        <position position="37"/>
    </location>
    <ligand>
        <name>GTP</name>
        <dbReference type="ChEBI" id="CHEBI:37565"/>
    </ligand>
</feature>
<feature type="binding site" evidence="2">
    <location>
        <position position="39"/>
    </location>
    <ligand>
        <name>GTP</name>
        <dbReference type="ChEBI" id="CHEBI:37565"/>
    </ligand>
</feature>
<feature type="binding site" evidence="2">
    <location>
        <position position="126"/>
    </location>
    <ligand>
        <name>GTP</name>
        <dbReference type="ChEBI" id="CHEBI:37565"/>
    </ligand>
</feature>
<feature type="binding site" evidence="2">
    <location>
        <position position="156"/>
    </location>
    <ligand>
        <name>GTP</name>
        <dbReference type="ChEBI" id="CHEBI:37565"/>
    </ligand>
</feature>
<feature type="binding site" evidence="2">
    <location>
        <position position="157"/>
    </location>
    <ligand>
        <name>GTP</name>
        <dbReference type="ChEBI" id="CHEBI:37565"/>
    </ligand>
</feature>
<feature type="modified residue" description="Phosphothreonine; by LRRK2" evidence="2">
    <location>
        <position position="71"/>
    </location>
</feature>
<feature type="modified residue" description="Phosphoserine" evidence="2">
    <location>
        <position position="72"/>
    </location>
</feature>
<feature type="lipid moiety-binding region" description="S-geranylgeranyl cysteine" evidence="1">
    <location>
        <position position="202"/>
    </location>
</feature>
<feature type="lipid moiety-binding region" description="S-geranylgeranyl cysteine" evidence="1">
    <location>
        <position position="203"/>
    </location>
</feature>
<feature type="sequence conflict" description="In Ref. 1; CAH92465." evidence="4" ref="1">
    <original>S</original>
    <variation>N</variation>
    <location>
        <position position="135"/>
    </location>
</feature>
<organism>
    <name type="scientific">Pongo abelii</name>
    <name type="common">Sumatran orangutan</name>
    <name type="synonym">Pongo pygmaeus abelii</name>
    <dbReference type="NCBI Taxonomy" id="9601"/>
    <lineage>
        <taxon>Eukaryota</taxon>
        <taxon>Metazoa</taxon>
        <taxon>Chordata</taxon>
        <taxon>Craniata</taxon>
        <taxon>Vertebrata</taxon>
        <taxon>Euteleostomi</taxon>
        <taxon>Mammalia</taxon>
        <taxon>Eutheria</taxon>
        <taxon>Euarchontoglires</taxon>
        <taxon>Primates</taxon>
        <taxon>Haplorrhini</taxon>
        <taxon>Catarrhini</taxon>
        <taxon>Hominidae</taxon>
        <taxon>Pongo</taxon>
    </lineage>
</organism>
<keyword id="KW-1003">Cell membrane</keyword>
<keyword id="KW-0963">Cytoplasm</keyword>
<keyword id="KW-0206">Cytoskeleton</keyword>
<keyword id="KW-0221">Differentiation</keyword>
<keyword id="KW-0333">Golgi apparatus</keyword>
<keyword id="KW-0342">GTP-binding</keyword>
<keyword id="KW-0449">Lipoprotein</keyword>
<keyword id="KW-0472">Membrane</keyword>
<keyword id="KW-0547">Nucleotide-binding</keyword>
<keyword id="KW-0597">Phosphoprotein</keyword>
<keyword id="KW-0636">Prenylation</keyword>
<keyword id="KW-0653">Protein transport</keyword>
<keyword id="KW-1185">Reference proteome</keyword>
<keyword id="KW-0813">Transport</keyword>
<protein>
    <recommendedName>
        <fullName>Ras-related protein Rab-7L1</fullName>
    </recommendedName>
    <alternativeName>
        <fullName>Rab-7-like protein 1</fullName>
    </alternativeName>
    <alternativeName>
        <fullName evidence="2">Ras-related protein Rab-29</fullName>
    </alternativeName>
</protein>
<gene>
    <name type="primary">RAB29</name>
    <name type="synonym">RAB7L1</name>
</gene>
<reference key="1">
    <citation type="submission" date="2004-11" db="EMBL/GenBank/DDBJ databases">
        <authorList>
            <consortium name="The German cDNA consortium"/>
        </authorList>
    </citation>
    <scope>NUCLEOTIDE SEQUENCE [LARGE SCALE MRNA]</scope>
    <source>
        <tissue>Brain cortex</tissue>
        <tissue>Kidney</tissue>
    </source>
</reference>
<proteinExistence type="evidence at transcript level"/>
<accession>Q5R7A4</accession>
<accession>Q5R6Z5</accession>